<protein>
    <recommendedName>
        <fullName>Hemoglobin subunit beta</fullName>
    </recommendedName>
    <alternativeName>
        <fullName>Beta-globin</fullName>
    </alternativeName>
    <alternativeName>
        <fullName>Hemoglobin beta chain</fullName>
    </alternativeName>
</protein>
<reference key="1">
    <citation type="submission" date="1996-06" db="EMBL/GenBank/DDBJ databases">
        <title>Molecular genetic indicators of selection in haemoglobin encoding loci of the Atlantic cod, Gadus morhua.</title>
        <authorList>
            <person name="Tipping D.R."/>
            <person name="Birley A.J."/>
        </authorList>
    </citation>
    <scope>NUCLEOTIDE SEQUENCE [MRNA]</scope>
    <source>
        <tissue>Blood</tissue>
    </source>
</reference>
<comment type="function">
    <text>Involved in oxygen transport from gills to the various peripheral tissues.</text>
</comment>
<comment type="subunit">
    <text>Heterotetramer of two alpha chains and two beta chains.</text>
</comment>
<comment type="tissue specificity">
    <text>Red blood cells.</text>
</comment>
<comment type="similarity">
    <text evidence="2">Belongs to the globin family.</text>
</comment>
<sequence>MVEWTDSERAIINSIFSNLDYEEIGRKSLCRCLIVYPWTQRYFGGFGNLYNAETILCNPLIAAHGTKILHGLDRALKNMDDIKNTYAELSLLHSDKLHVDPDNFRLLADCLTGVIAAKMVPAFTVDTQVGWQKFRSFVVSALGREYH</sequence>
<accession>O13077</accession>
<evidence type="ECO:0000250" key="1"/>
<evidence type="ECO:0000255" key="2">
    <source>
        <dbReference type="PROSITE-ProRule" id="PRU00238"/>
    </source>
</evidence>
<organism>
    <name type="scientific">Gadus morhua</name>
    <name type="common">Atlantic cod</name>
    <dbReference type="NCBI Taxonomy" id="8049"/>
    <lineage>
        <taxon>Eukaryota</taxon>
        <taxon>Metazoa</taxon>
        <taxon>Chordata</taxon>
        <taxon>Craniata</taxon>
        <taxon>Vertebrata</taxon>
        <taxon>Euteleostomi</taxon>
        <taxon>Actinopterygii</taxon>
        <taxon>Neopterygii</taxon>
        <taxon>Teleostei</taxon>
        <taxon>Neoteleostei</taxon>
        <taxon>Acanthomorphata</taxon>
        <taxon>Zeiogadaria</taxon>
        <taxon>Gadariae</taxon>
        <taxon>Gadiformes</taxon>
        <taxon>Gadoidei</taxon>
        <taxon>Gadidae</taxon>
        <taxon>Gadus</taxon>
    </lineage>
</organism>
<proteinExistence type="evidence at transcript level"/>
<gene>
    <name type="primary">hbb</name>
</gene>
<dbReference type="EMBL" id="X98247">
    <property type="protein sequence ID" value="CAA66903.1"/>
    <property type="molecule type" value="mRNA"/>
</dbReference>
<dbReference type="SMR" id="O13077"/>
<dbReference type="STRING" id="8049.ENSGMOP00000016983"/>
<dbReference type="Proteomes" id="UP000694546">
    <property type="component" value="Unplaced"/>
</dbReference>
<dbReference type="GO" id="GO:0072562">
    <property type="term" value="C:blood microparticle"/>
    <property type="evidence" value="ECO:0007669"/>
    <property type="project" value="TreeGrafter"/>
</dbReference>
<dbReference type="GO" id="GO:0031838">
    <property type="term" value="C:haptoglobin-hemoglobin complex"/>
    <property type="evidence" value="ECO:0007669"/>
    <property type="project" value="TreeGrafter"/>
</dbReference>
<dbReference type="GO" id="GO:0005833">
    <property type="term" value="C:hemoglobin complex"/>
    <property type="evidence" value="ECO:0007669"/>
    <property type="project" value="InterPro"/>
</dbReference>
<dbReference type="GO" id="GO:0031720">
    <property type="term" value="F:haptoglobin binding"/>
    <property type="evidence" value="ECO:0007669"/>
    <property type="project" value="TreeGrafter"/>
</dbReference>
<dbReference type="GO" id="GO:0020037">
    <property type="term" value="F:heme binding"/>
    <property type="evidence" value="ECO:0007669"/>
    <property type="project" value="InterPro"/>
</dbReference>
<dbReference type="GO" id="GO:0046872">
    <property type="term" value="F:metal ion binding"/>
    <property type="evidence" value="ECO:0007669"/>
    <property type="project" value="UniProtKB-KW"/>
</dbReference>
<dbReference type="GO" id="GO:0043177">
    <property type="term" value="F:organic acid binding"/>
    <property type="evidence" value="ECO:0007669"/>
    <property type="project" value="TreeGrafter"/>
</dbReference>
<dbReference type="GO" id="GO:0019825">
    <property type="term" value="F:oxygen binding"/>
    <property type="evidence" value="ECO:0007669"/>
    <property type="project" value="InterPro"/>
</dbReference>
<dbReference type="GO" id="GO:0005344">
    <property type="term" value="F:oxygen carrier activity"/>
    <property type="evidence" value="ECO:0007669"/>
    <property type="project" value="UniProtKB-KW"/>
</dbReference>
<dbReference type="GO" id="GO:0004601">
    <property type="term" value="F:peroxidase activity"/>
    <property type="evidence" value="ECO:0007669"/>
    <property type="project" value="TreeGrafter"/>
</dbReference>
<dbReference type="GO" id="GO:0042744">
    <property type="term" value="P:hydrogen peroxide catabolic process"/>
    <property type="evidence" value="ECO:0007669"/>
    <property type="project" value="TreeGrafter"/>
</dbReference>
<dbReference type="CDD" id="cd08925">
    <property type="entry name" value="Hb-beta-like"/>
    <property type="match status" value="1"/>
</dbReference>
<dbReference type="Gene3D" id="1.10.490.10">
    <property type="entry name" value="Globins"/>
    <property type="match status" value="1"/>
</dbReference>
<dbReference type="InterPro" id="IPR000971">
    <property type="entry name" value="Globin"/>
</dbReference>
<dbReference type="InterPro" id="IPR009050">
    <property type="entry name" value="Globin-like_sf"/>
</dbReference>
<dbReference type="InterPro" id="IPR012292">
    <property type="entry name" value="Globin/Proto"/>
</dbReference>
<dbReference type="InterPro" id="IPR002337">
    <property type="entry name" value="Hemoglobin_b"/>
</dbReference>
<dbReference type="InterPro" id="IPR050056">
    <property type="entry name" value="Hemoglobin_oxygen_transport"/>
</dbReference>
<dbReference type="PANTHER" id="PTHR11442">
    <property type="entry name" value="HEMOGLOBIN FAMILY MEMBER"/>
    <property type="match status" value="1"/>
</dbReference>
<dbReference type="PANTHER" id="PTHR11442:SF7">
    <property type="entry name" value="HEMOGLOBIN SUBUNIT EPSILON"/>
    <property type="match status" value="1"/>
</dbReference>
<dbReference type="Pfam" id="PF00042">
    <property type="entry name" value="Globin"/>
    <property type="match status" value="1"/>
</dbReference>
<dbReference type="PRINTS" id="PR00814">
    <property type="entry name" value="BETAHAEM"/>
</dbReference>
<dbReference type="SUPFAM" id="SSF46458">
    <property type="entry name" value="Globin-like"/>
    <property type="match status" value="1"/>
</dbReference>
<dbReference type="PROSITE" id="PS01033">
    <property type="entry name" value="GLOBIN"/>
    <property type="match status" value="1"/>
</dbReference>
<name>HBB_GADMO</name>
<feature type="initiator methionine" description="Removed" evidence="1">
    <location>
        <position position="1"/>
    </location>
</feature>
<feature type="chain" id="PRO_0000052960" description="Hemoglobin subunit beta">
    <location>
        <begin position="2"/>
        <end position="147"/>
    </location>
</feature>
<feature type="domain" description="Globin" evidence="2">
    <location>
        <begin position="3"/>
        <end position="147"/>
    </location>
</feature>
<feature type="binding site" description="distal binding residue">
    <location>
        <position position="64"/>
    </location>
    <ligand>
        <name>heme b</name>
        <dbReference type="ChEBI" id="CHEBI:60344"/>
    </ligand>
    <ligandPart>
        <name>Fe</name>
        <dbReference type="ChEBI" id="CHEBI:18248"/>
    </ligandPart>
</feature>
<feature type="binding site" description="proximal binding residue">
    <location>
        <position position="93"/>
    </location>
    <ligand>
        <name>heme b</name>
        <dbReference type="ChEBI" id="CHEBI:60344"/>
    </ligand>
    <ligandPart>
        <name>Fe</name>
        <dbReference type="ChEBI" id="CHEBI:18248"/>
    </ligandPart>
</feature>
<keyword id="KW-0349">Heme</keyword>
<keyword id="KW-0408">Iron</keyword>
<keyword id="KW-0479">Metal-binding</keyword>
<keyword id="KW-0561">Oxygen transport</keyword>
<keyword id="KW-1185">Reference proteome</keyword>
<keyword id="KW-0813">Transport</keyword>